<organism>
    <name type="scientific">Parvibaculum lavamentivorans (strain DS-1 / DSM 13023 / NCIMB 13966)</name>
    <dbReference type="NCBI Taxonomy" id="402881"/>
    <lineage>
        <taxon>Bacteria</taxon>
        <taxon>Pseudomonadati</taxon>
        <taxon>Pseudomonadota</taxon>
        <taxon>Alphaproteobacteria</taxon>
        <taxon>Hyphomicrobiales</taxon>
        <taxon>Parvibaculaceae</taxon>
        <taxon>Parvibaculum</taxon>
    </lineage>
</organism>
<name>MIAB_PARL1</name>
<evidence type="ECO:0000255" key="1">
    <source>
        <dbReference type="HAMAP-Rule" id="MF_01864"/>
    </source>
</evidence>
<evidence type="ECO:0000255" key="2">
    <source>
        <dbReference type="PROSITE-ProRule" id="PRU01266"/>
    </source>
</evidence>
<reference key="1">
    <citation type="journal article" date="2011" name="Stand. Genomic Sci.">
        <title>Complete genome sequence of Parvibaculum lavamentivorans type strain (DS-1(T)).</title>
        <authorList>
            <person name="Schleheck D."/>
            <person name="Weiss M."/>
            <person name="Pitluck S."/>
            <person name="Bruce D."/>
            <person name="Land M.L."/>
            <person name="Han S."/>
            <person name="Saunders E."/>
            <person name="Tapia R."/>
            <person name="Detter C."/>
            <person name="Brettin T."/>
            <person name="Han J."/>
            <person name="Woyke T."/>
            <person name="Goodwin L."/>
            <person name="Pennacchio L."/>
            <person name="Nolan M."/>
            <person name="Cook A.M."/>
            <person name="Kjelleberg S."/>
            <person name="Thomas T."/>
        </authorList>
    </citation>
    <scope>NUCLEOTIDE SEQUENCE [LARGE SCALE GENOMIC DNA]</scope>
    <source>
        <strain>DS-1 / DSM 13023 / NCIMB 13966</strain>
    </source>
</reference>
<sequence length="467" mass="51521">MPEAGPEAEPGSPRKKIFVKTYGCQMNVYDSARMVDVMAPSGYTEVDAPEDADIVILNTCHIREKAAEKVYSELGRLRELKKEKSGRGEELLIGVAGCVAQAEGEEMRRRAPVVDLVLGPQTYHRLPEYVARLANGGPGIVETEFPVDDKFASLPMAEKRKTLARGATAFLTIQEGCDKFCTFCVVPYTRGSEFSRPVARILDEARSLVDAGVREITLLGQNVNAWHGEDQAGRPATLGYLIRALAEIEGLARLRYTTSHPRDMDEELIAAHRDVPALMPYLHLPVQSGSDRILAAMNRRHDADSYHRIIGRIRAAKPDIALSSDFIVGFPGETEADFEATLDLIRTVGFAQAYSFKYSPRPGTPAATEEDQVPEEVKSERLQRLQALLGEQQLAFNAGCAGRTMPVLFDRRGRGESQLVGRSPYLQSVHIDDAPEHLFGSLVDVVIEEGHRNSLRGRLREEAAVLA</sequence>
<feature type="chain" id="PRO_0000374426" description="tRNA-2-methylthio-N(6)-dimethylallyladenosine synthase">
    <location>
        <begin position="1"/>
        <end position="467"/>
    </location>
</feature>
<feature type="domain" description="MTTase N-terminal" evidence="1">
    <location>
        <begin position="15"/>
        <end position="135"/>
    </location>
</feature>
<feature type="domain" description="Radical SAM core" evidence="2">
    <location>
        <begin position="163"/>
        <end position="395"/>
    </location>
</feature>
<feature type="domain" description="TRAM" evidence="1">
    <location>
        <begin position="398"/>
        <end position="461"/>
    </location>
</feature>
<feature type="binding site" evidence="1">
    <location>
        <position position="24"/>
    </location>
    <ligand>
        <name>[4Fe-4S] cluster</name>
        <dbReference type="ChEBI" id="CHEBI:49883"/>
        <label>1</label>
    </ligand>
</feature>
<feature type="binding site" evidence="1">
    <location>
        <position position="60"/>
    </location>
    <ligand>
        <name>[4Fe-4S] cluster</name>
        <dbReference type="ChEBI" id="CHEBI:49883"/>
        <label>1</label>
    </ligand>
</feature>
<feature type="binding site" evidence="1">
    <location>
        <position position="98"/>
    </location>
    <ligand>
        <name>[4Fe-4S] cluster</name>
        <dbReference type="ChEBI" id="CHEBI:49883"/>
        <label>1</label>
    </ligand>
</feature>
<feature type="binding site" evidence="1">
    <location>
        <position position="177"/>
    </location>
    <ligand>
        <name>[4Fe-4S] cluster</name>
        <dbReference type="ChEBI" id="CHEBI:49883"/>
        <label>2</label>
        <note>4Fe-4S-S-AdoMet</note>
    </ligand>
</feature>
<feature type="binding site" evidence="1">
    <location>
        <position position="181"/>
    </location>
    <ligand>
        <name>[4Fe-4S] cluster</name>
        <dbReference type="ChEBI" id="CHEBI:49883"/>
        <label>2</label>
        <note>4Fe-4S-S-AdoMet</note>
    </ligand>
</feature>
<feature type="binding site" evidence="1">
    <location>
        <position position="184"/>
    </location>
    <ligand>
        <name>[4Fe-4S] cluster</name>
        <dbReference type="ChEBI" id="CHEBI:49883"/>
        <label>2</label>
        <note>4Fe-4S-S-AdoMet</note>
    </ligand>
</feature>
<comment type="function">
    <text evidence="1">Catalyzes the methylthiolation of N6-(dimethylallyl)adenosine (i(6)A), leading to the formation of 2-methylthio-N6-(dimethylallyl)adenosine (ms(2)i(6)A) at position 37 in tRNAs that read codons beginning with uridine.</text>
</comment>
<comment type="catalytic activity">
    <reaction evidence="1">
        <text>N(6)-dimethylallyladenosine(37) in tRNA + (sulfur carrier)-SH + AH2 + 2 S-adenosyl-L-methionine = 2-methylsulfanyl-N(6)-dimethylallyladenosine(37) in tRNA + (sulfur carrier)-H + 5'-deoxyadenosine + L-methionine + A + S-adenosyl-L-homocysteine + 2 H(+)</text>
        <dbReference type="Rhea" id="RHEA:37067"/>
        <dbReference type="Rhea" id="RHEA-COMP:10375"/>
        <dbReference type="Rhea" id="RHEA-COMP:10376"/>
        <dbReference type="Rhea" id="RHEA-COMP:14737"/>
        <dbReference type="Rhea" id="RHEA-COMP:14739"/>
        <dbReference type="ChEBI" id="CHEBI:13193"/>
        <dbReference type="ChEBI" id="CHEBI:15378"/>
        <dbReference type="ChEBI" id="CHEBI:17319"/>
        <dbReference type="ChEBI" id="CHEBI:17499"/>
        <dbReference type="ChEBI" id="CHEBI:29917"/>
        <dbReference type="ChEBI" id="CHEBI:57844"/>
        <dbReference type="ChEBI" id="CHEBI:57856"/>
        <dbReference type="ChEBI" id="CHEBI:59789"/>
        <dbReference type="ChEBI" id="CHEBI:64428"/>
        <dbReference type="ChEBI" id="CHEBI:74415"/>
        <dbReference type="ChEBI" id="CHEBI:74417"/>
        <dbReference type="EC" id="2.8.4.3"/>
    </reaction>
</comment>
<comment type="cofactor">
    <cofactor evidence="1">
        <name>[4Fe-4S] cluster</name>
        <dbReference type="ChEBI" id="CHEBI:49883"/>
    </cofactor>
    <text evidence="1">Binds 2 [4Fe-4S] clusters. One cluster is coordinated with 3 cysteines and an exchangeable S-adenosyl-L-methionine.</text>
</comment>
<comment type="subunit">
    <text evidence="1">Monomer.</text>
</comment>
<comment type="subcellular location">
    <subcellularLocation>
        <location evidence="1">Cytoplasm</location>
    </subcellularLocation>
</comment>
<comment type="similarity">
    <text evidence="1">Belongs to the methylthiotransferase family. MiaB subfamily.</text>
</comment>
<protein>
    <recommendedName>
        <fullName evidence="1">tRNA-2-methylthio-N(6)-dimethylallyladenosine synthase</fullName>
        <ecNumber evidence="1">2.8.4.3</ecNumber>
    </recommendedName>
    <alternativeName>
        <fullName evidence="1">(Dimethylallyl)adenosine tRNA methylthiotransferase MiaB</fullName>
    </alternativeName>
    <alternativeName>
        <fullName evidence="1">tRNA-i(6)A37 methylthiotransferase</fullName>
    </alternativeName>
</protein>
<accession>A7HZ82</accession>
<keyword id="KW-0004">4Fe-4S</keyword>
<keyword id="KW-0963">Cytoplasm</keyword>
<keyword id="KW-0408">Iron</keyword>
<keyword id="KW-0411">Iron-sulfur</keyword>
<keyword id="KW-0479">Metal-binding</keyword>
<keyword id="KW-1185">Reference proteome</keyword>
<keyword id="KW-0949">S-adenosyl-L-methionine</keyword>
<keyword id="KW-0808">Transferase</keyword>
<keyword id="KW-0819">tRNA processing</keyword>
<gene>
    <name evidence="1" type="primary">miaB</name>
    <name type="ordered locus">Plav_3617</name>
</gene>
<proteinExistence type="inferred from homology"/>
<dbReference type="EC" id="2.8.4.3" evidence="1"/>
<dbReference type="EMBL" id="CP000774">
    <property type="protein sequence ID" value="ABS65215.1"/>
    <property type="molecule type" value="Genomic_DNA"/>
</dbReference>
<dbReference type="RefSeq" id="WP_012112475.1">
    <property type="nucleotide sequence ID" value="NC_009719.1"/>
</dbReference>
<dbReference type="SMR" id="A7HZ82"/>
<dbReference type="STRING" id="402881.Plav_3617"/>
<dbReference type="KEGG" id="pla:Plav_3617"/>
<dbReference type="eggNOG" id="COG0621">
    <property type="taxonomic scope" value="Bacteria"/>
</dbReference>
<dbReference type="HOGENOM" id="CLU_018697_2_0_5"/>
<dbReference type="OrthoDB" id="9805215at2"/>
<dbReference type="Proteomes" id="UP000006377">
    <property type="component" value="Chromosome"/>
</dbReference>
<dbReference type="GO" id="GO:0005829">
    <property type="term" value="C:cytosol"/>
    <property type="evidence" value="ECO:0007669"/>
    <property type="project" value="TreeGrafter"/>
</dbReference>
<dbReference type="GO" id="GO:0051539">
    <property type="term" value="F:4 iron, 4 sulfur cluster binding"/>
    <property type="evidence" value="ECO:0007669"/>
    <property type="project" value="UniProtKB-UniRule"/>
</dbReference>
<dbReference type="GO" id="GO:0046872">
    <property type="term" value="F:metal ion binding"/>
    <property type="evidence" value="ECO:0007669"/>
    <property type="project" value="UniProtKB-KW"/>
</dbReference>
<dbReference type="GO" id="GO:0035597">
    <property type="term" value="F:N6-isopentenyladenosine methylthiotransferase activity"/>
    <property type="evidence" value="ECO:0007669"/>
    <property type="project" value="TreeGrafter"/>
</dbReference>
<dbReference type="CDD" id="cd01335">
    <property type="entry name" value="Radical_SAM"/>
    <property type="match status" value="1"/>
</dbReference>
<dbReference type="FunFam" id="3.40.50.12160:FF:000001">
    <property type="entry name" value="tRNA-2-methylthio-N(6)-dimethylallyladenosine synthase"/>
    <property type="match status" value="1"/>
</dbReference>
<dbReference type="FunFam" id="3.80.30.20:FF:000001">
    <property type="entry name" value="tRNA-2-methylthio-N(6)-dimethylallyladenosine synthase 2"/>
    <property type="match status" value="1"/>
</dbReference>
<dbReference type="Gene3D" id="3.40.50.12160">
    <property type="entry name" value="Methylthiotransferase, N-terminal domain"/>
    <property type="match status" value="1"/>
</dbReference>
<dbReference type="Gene3D" id="3.80.30.20">
    <property type="entry name" value="tm_1862 like domain"/>
    <property type="match status" value="1"/>
</dbReference>
<dbReference type="HAMAP" id="MF_01864">
    <property type="entry name" value="tRNA_metthiotr_MiaB"/>
    <property type="match status" value="1"/>
</dbReference>
<dbReference type="InterPro" id="IPR006638">
    <property type="entry name" value="Elp3/MiaA/NifB-like_rSAM"/>
</dbReference>
<dbReference type="InterPro" id="IPR005839">
    <property type="entry name" value="Methylthiotransferase"/>
</dbReference>
<dbReference type="InterPro" id="IPR020612">
    <property type="entry name" value="Methylthiotransferase_CS"/>
</dbReference>
<dbReference type="InterPro" id="IPR013848">
    <property type="entry name" value="Methylthiotransferase_N"/>
</dbReference>
<dbReference type="InterPro" id="IPR038135">
    <property type="entry name" value="Methylthiotransferase_N_sf"/>
</dbReference>
<dbReference type="InterPro" id="IPR006463">
    <property type="entry name" value="MiaB_methiolase"/>
</dbReference>
<dbReference type="InterPro" id="IPR007197">
    <property type="entry name" value="rSAM"/>
</dbReference>
<dbReference type="InterPro" id="IPR023404">
    <property type="entry name" value="rSAM_horseshoe"/>
</dbReference>
<dbReference type="InterPro" id="IPR002792">
    <property type="entry name" value="TRAM_dom"/>
</dbReference>
<dbReference type="NCBIfam" id="TIGR01574">
    <property type="entry name" value="miaB-methiolase"/>
    <property type="match status" value="1"/>
</dbReference>
<dbReference type="NCBIfam" id="TIGR00089">
    <property type="entry name" value="MiaB/RimO family radical SAM methylthiotransferase"/>
    <property type="match status" value="1"/>
</dbReference>
<dbReference type="PANTHER" id="PTHR43020">
    <property type="entry name" value="CDK5 REGULATORY SUBUNIT-ASSOCIATED PROTEIN 1"/>
    <property type="match status" value="1"/>
</dbReference>
<dbReference type="PANTHER" id="PTHR43020:SF2">
    <property type="entry name" value="MITOCHONDRIAL TRNA METHYLTHIOTRANSFERASE CDK5RAP1"/>
    <property type="match status" value="1"/>
</dbReference>
<dbReference type="Pfam" id="PF04055">
    <property type="entry name" value="Radical_SAM"/>
    <property type="match status" value="1"/>
</dbReference>
<dbReference type="Pfam" id="PF01938">
    <property type="entry name" value="TRAM"/>
    <property type="match status" value="1"/>
</dbReference>
<dbReference type="Pfam" id="PF00919">
    <property type="entry name" value="UPF0004"/>
    <property type="match status" value="1"/>
</dbReference>
<dbReference type="SFLD" id="SFLDF00273">
    <property type="entry name" value="(dimethylallyl)adenosine_tRNA"/>
    <property type="match status" value="1"/>
</dbReference>
<dbReference type="SFLD" id="SFLDG01082">
    <property type="entry name" value="B12-binding_domain_containing"/>
    <property type="match status" value="1"/>
</dbReference>
<dbReference type="SFLD" id="SFLDS00029">
    <property type="entry name" value="Radical_SAM"/>
    <property type="match status" value="1"/>
</dbReference>
<dbReference type="SMART" id="SM00729">
    <property type="entry name" value="Elp3"/>
    <property type="match status" value="1"/>
</dbReference>
<dbReference type="SUPFAM" id="SSF102114">
    <property type="entry name" value="Radical SAM enzymes"/>
    <property type="match status" value="1"/>
</dbReference>
<dbReference type="PROSITE" id="PS51449">
    <property type="entry name" value="MTTASE_N"/>
    <property type="match status" value="1"/>
</dbReference>
<dbReference type="PROSITE" id="PS01278">
    <property type="entry name" value="MTTASE_RADICAL"/>
    <property type="match status" value="1"/>
</dbReference>
<dbReference type="PROSITE" id="PS51918">
    <property type="entry name" value="RADICAL_SAM"/>
    <property type="match status" value="1"/>
</dbReference>
<dbReference type="PROSITE" id="PS50926">
    <property type="entry name" value="TRAM"/>
    <property type="match status" value="1"/>
</dbReference>